<feature type="chain" id="PRO_0000238957" description="Osteoclast-stimulating factor 1">
    <location>
        <begin position="1"/>
        <end position="202"/>
    </location>
</feature>
<feature type="domain" description="SH3" evidence="2">
    <location>
        <begin position="12"/>
        <end position="71"/>
    </location>
</feature>
<feature type="repeat" description="ANK 1">
    <location>
        <begin position="72"/>
        <end position="101"/>
    </location>
</feature>
<feature type="repeat" description="ANK 2">
    <location>
        <begin position="105"/>
        <end position="135"/>
    </location>
</feature>
<feature type="repeat" description="ANK 3">
    <location>
        <begin position="139"/>
        <end position="168"/>
    </location>
</feature>
<organism>
    <name type="scientific">Gallus gallus</name>
    <name type="common">Chicken</name>
    <dbReference type="NCBI Taxonomy" id="9031"/>
    <lineage>
        <taxon>Eukaryota</taxon>
        <taxon>Metazoa</taxon>
        <taxon>Chordata</taxon>
        <taxon>Craniata</taxon>
        <taxon>Vertebrata</taxon>
        <taxon>Euteleostomi</taxon>
        <taxon>Archelosauria</taxon>
        <taxon>Archosauria</taxon>
        <taxon>Dinosauria</taxon>
        <taxon>Saurischia</taxon>
        <taxon>Theropoda</taxon>
        <taxon>Coelurosauria</taxon>
        <taxon>Aves</taxon>
        <taxon>Neognathae</taxon>
        <taxon>Galloanserae</taxon>
        <taxon>Galliformes</taxon>
        <taxon>Phasianidae</taxon>
        <taxon>Phasianinae</taxon>
        <taxon>Gallus</taxon>
    </lineage>
</organism>
<name>OSTF1_CHICK</name>
<keyword id="KW-0040">ANK repeat</keyword>
<keyword id="KW-0963">Cytoplasm</keyword>
<keyword id="KW-1185">Reference proteome</keyword>
<keyword id="KW-0677">Repeat</keyword>
<keyword id="KW-0728">SH3 domain</keyword>
<evidence type="ECO:0000250" key="1"/>
<evidence type="ECO:0000255" key="2">
    <source>
        <dbReference type="PROSITE-ProRule" id="PRU00192"/>
    </source>
</evidence>
<sequence length="202" mass="22296">MSKPPPKPAKPGQVKVFRALYTFEPRTPDELYFEEGDIIYISDMSDTNWWKGTCKGRTGLIPSNYVAEQAESIDNPLHEAAKRGNLSWLRECLDNQVGVNGLDKAGNTALYWACHGGHKDIVDVLFTQANLELNQQNKLGDTALHAAAWKGYADIVEMLLAKGARTDLKNNEKKLALDMATNAACASLLKKKQTAGTARTFK</sequence>
<dbReference type="EMBL" id="AJ720435">
    <property type="protein sequence ID" value="CAG32094.1"/>
    <property type="molecule type" value="mRNA"/>
</dbReference>
<dbReference type="SMR" id="Q5ZJJ9"/>
<dbReference type="FunCoup" id="Q5ZJJ9">
    <property type="interactions" value="1772"/>
</dbReference>
<dbReference type="STRING" id="9031.ENSGALP00000028084"/>
<dbReference type="PaxDb" id="9031-ENSGALP00000028084"/>
<dbReference type="VEuPathDB" id="HostDB:geneid_427258"/>
<dbReference type="eggNOG" id="ENOG502QTZB">
    <property type="taxonomic scope" value="Eukaryota"/>
</dbReference>
<dbReference type="InParanoid" id="Q5ZJJ9"/>
<dbReference type="OrthoDB" id="207120at2759"/>
<dbReference type="PhylomeDB" id="Q5ZJJ9"/>
<dbReference type="Proteomes" id="UP000000539">
    <property type="component" value="Unassembled WGS sequence"/>
</dbReference>
<dbReference type="GO" id="GO:0005737">
    <property type="term" value="C:cytoplasm"/>
    <property type="evidence" value="ECO:0007669"/>
    <property type="project" value="UniProtKB-SubCell"/>
</dbReference>
<dbReference type="GO" id="GO:0007165">
    <property type="term" value="P:signal transduction"/>
    <property type="evidence" value="ECO:0000318"/>
    <property type="project" value="GO_Central"/>
</dbReference>
<dbReference type="CDD" id="cd11772">
    <property type="entry name" value="SH3_OSTF1"/>
    <property type="match status" value="1"/>
</dbReference>
<dbReference type="FunFam" id="1.25.40.20:FF:000066">
    <property type="entry name" value="Osteoclast-stimulating factor 1"/>
    <property type="match status" value="1"/>
</dbReference>
<dbReference type="FunFam" id="2.30.30.40:FF:000158">
    <property type="entry name" value="Osteoclast-stimulating factor 1"/>
    <property type="match status" value="1"/>
</dbReference>
<dbReference type="Gene3D" id="1.25.40.20">
    <property type="entry name" value="Ankyrin repeat-containing domain"/>
    <property type="match status" value="1"/>
</dbReference>
<dbReference type="Gene3D" id="2.30.30.40">
    <property type="entry name" value="SH3 Domains"/>
    <property type="match status" value="1"/>
</dbReference>
<dbReference type="InterPro" id="IPR002110">
    <property type="entry name" value="Ankyrin_rpt"/>
</dbReference>
<dbReference type="InterPro" id="IPR036770">
    <property type="entry name" value="Ankyrin_rpt-contain_sf"/>
</dbReference>
<dbReference type="InterPro" id="IPR036028">
    <property type="entry name" value="SH3-like_dom_sf"/>
</dbReference>
<dbReference type="InterPro" id="IPR001452">
    <property type="entry name" value="SH3_domain"/>
</dbReference>
<dbReference type="PANTHER" id="PTHR24155">
    <property type="entry name" value="OSTEOCLAST-STIMULATING FACTOR 1"/>
    <property type="match status" value="1"/>
</dbReference>
<dbReference type="PANTHER" id="PTHR24155:SF10">
    <property type="entry name" value="OSTEOCLAST-STIMULATING FACTOR 1"/>
    <property type="match status" value="1"/>
</dbReference>
<dbReference type="Pfam" id="PF12796">
    <property type="entry name" value="Ank_2"/>
    <property type="match status" value="1"/>
</dbReference>
<dbReference type="Pfam" id="PF00018">
    <property type="entry name" value="SH3_1"/>
    <property type="match status" value="1"/>
</dbReference>
<dbReference type="PRINTS" id="PR01415">
    <property type="entry name" value="ANKYRIN"/>
</dbReference>
<dbReference type="PRINTS" id="PR00499">
    <property type="entry name" value="P67PHOX"/>
</dbReference>
<dbReference type="PRINTS" id="PR00452">
    <property type="entry name" value="SH3DOMAIN"/>
</dbReference>
<dbReference type="SMART" id="SM00248">
    <property type="entry name" value="ANK"/>
    <property type="match status" value="3"/>
</dbReference>
<dbReference type="SMART" id="SM00326">
    <property type="entry name" value="SH3"/>
    <property type="match status" value="1"/>
</dbReference>
<dbReference type="SUPFAM" id="SSF48403">
    <property type="entry name" value="Ankyrin repeat"/>
    <property type="match status" value="1"/>
</dbReference>
<dbReference type="SUPFAM" id="SSF50044">
    <property type="entry name" value="SH3-domain"/>
    <property type="match status" value="1"/>
</dbReference>
<dbReference type="PROSITE" id="PS50297">
    <property type="entry name" value="ANK_REP_REGION"/>
    <property type="match status" value="1"/>
</dbReference>
<dbReference type="PROSITE" id="PS50088">
    <property type="entry name" value="ANK_REPEAT"/>
    <property type="match status" value="1"/>
</dbReference>
<dbReference type="PROSITE" id="PS50002">
    <property type="entry name" value="SH3"/>
    <property type="match status" value="1"/>
</dbReference>
<reference key="1">
    <citation type="journal article" date="2005" name="Genome Biol.">
        <title>Full-length cDNAs from chicken bursal lymphocytes to facilitate gene function analysis.</title>
        <authorList>
            <person name="Caldwell R.B."/>
            <person name="Kierzek A.M."/>
            <person name="Arakawa H."/>
            <person name="Bezzubov Y."/>
            <person name="Zaim J."/>
            <person name="Fiedler P."/>
            <person name="Kutter S."/>
            <person name="Blagodatski A."/>
            <person name="Kostovska D."/>
            <person name="Koter M."/>
            <person name="Plachy J."/>
            <person name="Carninci P."/>
            <person name="Hayashizaki Y."/>
            <person name="Buerstedde J.-M."/>
        </authorList>
    </citation>
    <scope>NUCLEOTIDE SEQUENCE [LARGE SCALE MRNA]</scope>
    <source>
        <strain>CB</strain>
        <tissue>Bursa of Fabricius</tissue>
    </source>
</reference>
<accession>Q5ZJJ9</accession>
<protein>
    <recommendedName>
        <fullName>Osteoclast-stimulating factor 1</fullName>
    </recommendedName>
</protein>
<gene>
    <name type="primary">OSTF1</name>
    <name type="ORF">RCJMB04_17j8</name>
</gene>
<comment type="function">
    <text evidence="1">Induces bone resorption, acting probably through a signaling cascade which results in the secretion of factor(s) enhancing osteoclast formation and activity.</text>
</comment>
<comment type="subcellular location">
    <subcellularLocation>
        <location evidence="1">Cytoplasm</location>
    </subcellularLocation>
</comment>
<proteinExistence type="evidence at transcript level"/>